<keyword id="KW-0240">DNA-directed RNA polymerase</keyword>
<keyword id="KW-0548">Nucleotidyltransferase</keyword>
<keyword id="KW-0804">Transcription</keyword>
<keyword id="KW-0808">Transferase</keyword>
<gene>
    <name evidence="1" type="primary">rpoA</name>
    <name type="ordered locus">CMM_2584</name>
</gene>
<name>RPOA_CLAM3</name>
<sequence length="331" mass="36045">MLIAQRPTLTEESISEFRSRFVIEPLEPGFGYTLGNSLRRTLLSSIPGAAVTSIRIDGVLHEFSTVPGVKEDVTEIILNIKGLVVSSEHDEPITAYLRKQGAGQVTAADISAPAGVEIHNPELVIATLNEKAKFELELTIERGRGYVSATQNRSEFSEAGQIPVDSIYSPVLKVTYRVEATRAGERTDFDRLVVDVETKSAITPRDAIASAGRTLTELFGLARELNSAAEGIEIGPAPVDAVLSSELSMPIEDLDLSVRSYNCLKREGINNVSELVALSETQLMNIRNFGQKSVDEVKDKLVELGLSLKDAVPGFDGAHYYSYDEDETTTN</sequence>
<comment type="function">
    <text evidence="1">DNA-dependent RNA polymerase catalyzes the transcription of DNA into RNA using the four ribonucleoside triphosphates as substrates.</text>
</comment>
<comment type="catalytic activity">
    <reaction evidence="1">
        <text>RNA(n) + a ribonucleoside 5'-triphosphate = RNA(n+1) + diphosphate</text>
        <dbReference type="Rhea" id="RHEA:21248"/>
        <dbReference type="Rhea" id="RHEA-COMP:14527"/>
        <dbReference type="Rhea" id="RHEA-COMP:17342"/>
        <dbReference type="ChEBI" id="CHEBI:33019"/>
        <dbReference type="ChEBI" id="CHEBI:61557"/>
        <dbReference type="ChEBI" id="CHEBI:140395"/>
        <dbReference type="EC" id="2.7.7.6"/>
    </reaction>
</comment>
<comment type="subunit">
    <text evidence="1">Homodimer. The RNAP catalytic core consists of 2 alpha, 1 beta, 1 beta' and 1 omega subunit. When a sigma factor is associated with the core the holoenzyme is formed, which can initiate transcription.</text>
</comment>
<comment type="domain">
    <text evidence="1">The N-terminal domain is essential for RNAP assembly and basal transcription, whereas the C-terminal domain is involved in interaction with transcriptional regulators and with upstream promoter elements.</text>
</comment>
<comment type="similarity">
    <text evidence="1">Belongs to the RNA polymerase alpha chain family.</text>
</comment>
<accession>A5CU80</accession>
<dbReference type="EC" id="2.7.7.6" evidence="1"/>
<dbReference type="EMBL" id="AM711867">
    <property type="protein sequence ID" value="CAN02667.1"/>
    <property type="molecule type" value="Genomic_DNA"/>
</dbReference>
<dbReference type="RefSeq" id="WP_012039273.1">
    <property type="nucleotide sequence ID" value="NC_009480.1"/>
</dbReference>
<dbReference type="SMR" id="A5CU80"/>
<dbReference type="KEGG" id="cmi:CMM_2584"/>
<dbReference type="eggNOG" id="COG0202">
    <property type="taxonomic scope" value="Bacteria"/>
</dbReference>
<dbReference type="HOGENOM" id="CLU_053084_0_1_11"/>
<dbReference type="OrthoDB" id="9805706at2"/>
<dbReference type="Proteomes" id="UP000001564">
    <property type="component" value="Chromosome"/>
</dbReference>
<dbReference type="GO" id="GO:0005737">
    <property type="term" value="C:cytoplasm"/>
    <property type="evidence" value="ECO:0007669"/>
    <property type="project" value="UniProtKB-ARBA"/>
</dbReference>
<dbReference type="GO" id="GO:0000428">
    <property type="term" value="C:DNA-directed RNA polymerase complex"/>
    <property type="evidence" value="ECO:0007669"/>
    <property type="project" value="UniProtKB-KW"/>
</dbReference>
<dbReference type="GO" id="GO:0003677">
    <property type="term" value="F:DNA binding"/>
    <property type="evidence" value="ECO:0007669"/>
    <property type="project" value="UniProtKB-UniRule"/>
</dbReference>
<dbReference type="GO" id="GO:0003899">
    <property type="term" value="F:DNA-directed RNA polymerase activity"/>
    <property type="evidence" value="ECO:0007669"/>
    <property type="project" value="UniProtKB-UniRule"/>
</dbReference>
<dbReference type="GO" id="GO:0046983">
    <property type="term" value="F:protein dimerization activity"/>
    <property type="evidence" value="ECO:0007669"/>
    <property type="project" value="InterPro"/>
</dbReference>
<dbReference type="GO" id="GO:0006351">
    <property type="term" value="P:DNA-templated transcription"/>
    <property type="evidence" value="ECO:0007669"/>
    <property type="project" value="UniProtKB-UniRule"/>
</dbReference>
<dbReference type="CDD" id="cd06928">
    <property type="entry name" value="RNAP_alpha_NTD"/>
    <property type="match status" value="1"/>
</dbReference>
<dbReference type="FunFam" id="1.10.150.20:FF:000001">
    <property type="entry name" value="DNA-directed RNA polymerase subunit alpha"/>
    <property type="match status" value="1"/>
</dbReference>
<dbReference type="FunFam" id="2.170.120.12:FF:000001">
    <property type="entry name" value="DNA-directed RNA polymerase subunit alpha"/>
    <property type="match status" value="1"/>
</dbReference>
<dbReference type="Gene3D" id="1.10.150.20">
    <property type="entry name" value="5' to 3' exonuclease, C-terminal subdomain"/>
    <property type="match status" value="1"/>
</dbReference>
<dbReference type="Gene3D" id="2.170.120.12">
    <property type="entry name" value="DNA-directed RNA polymerase, insert domain"/>
    <property type="match status" value="1"/>
</dbReference>
<dbReference type="Gene3D" id="3.30.1360.10">
    <property type="entry name" value="RNA polymerase, RBP11-like subunit"/>
    <property type="match status" value="1"/>
</dbReference>
<dbReference type="HAMAP" id="MF_00059">
    <property type="entry name" value="RNApol_bact_RpoA"/>
    <property type="match status" value="1"/>
</dbReference>
<dbReference type="InterPro" id="IPR011262">
    <property type="entry name" value="DNA-dir_RNA_pol_insert"/>
</dbReference>
<dbReference type="InterPro" id="IPR011263">
    <property type="entry name" value="DNA-dir_RNA_pol_RpoA/D/Rpb3"/>
</dbReference>
<dbReference type="InterPro" id="IPR011773">
    <property type="entry name" value="DNA-dir_RpoA"/>
</dbReference>
<dbReference type="InterPro" id="IPR036603">
    <property type="entry name" value="RBP11-like"/>
</dbReference>
<dbReference type="InterPro" id="IPR011260">
    <property type="entry name" value="RNAP_asu_C"/>
</dbReference>
<dbReference type="InterPro" id="IPR036643">
    <property type="entry name" value="RNApol_insert_sf"/>
</dbReference>
<dbReference type="NCBIfam" id="NF003513">
    <property type="entry name" value="PRK05182.1-2"/>
    <property type="match status" value="1"/>
</dbReference>
<dbReference type="NCBIfam" id="NF003514">
    <property type="entry name" value="PRK05182.1-4"/>
    <property type="match status" value="1"/>
</dbReference>
<dbReference type="NCBIfam" id="NF003519">
    <property type="entry name" value="PRK05182.2-5"/>
    <property type="match status" value="1"/>
</dbReference>
<dbReference type="NCBIfam" id="TIGR02027">
    <property type="entry name" value="rpoA"/>
    <property type="match status" value="1"/>
</dbReference>
<dbReference type="Pfam" id="PF01000">
    <property type="entry name" value="RNA_pol_A_bac"/>
    <property type="match status" value="1"/>
</dbReference>
<dbReference type="Pfam" id="PF03118">
    <property type="entry name" value="RNA_pol_A_CTD"/>
    <property type="match status" value="1"/>
</dbReference>
<dbReference type="Pfam" id="PF01193">
    <property type="entry name" value="RNA_pol_L"/>
    <property type="match status" value="1"/>
</dbReference>
<dbReference type="SMART" id="SM00662">
    <property type="entry name" value="RPOLD"/>
    <property type="match status" value="1"/>
</dbReference>
<dbReference type="SUPFAM" id="SSF47789">
    <property type="entry name" value="C-terminal domain of RNA polymerase alpha subunit"/>
    <property type="match status" value="1"/>
</dbReference>
<dbReference type="SUPFAM" id="SSF56553">
    <property type="entry name" value="Insert subdomain of RNA polymerase alpha subunit"/>
    <property type="match status" value="1"/>
</dbReference>
<dbReference type="SUPFAM" id="SSF55257">
    <property type="entry name" value="RBP11-like subunits of RNA polymerase"/>
    <property type="match status" value="1"/>
</dbReference>
<evidence type="ECO:0000255" key="1">
    <source>
        <dbReference type="HAMAP-Rule" id="MF_00059"/>
    </source>
</evidence>
<organism>
    <name type="scientific">Clavibacter michiganensis subsp. michiganensis (strain NCPPB 382)</name>
    <dbReference type="NCBI Taxonomy" id="443906"/>
    <lineage>
        <taxon>Bacteria</taxon>
        <taxon>Bacillati</taxon>
        <taxon>Actinomycetota</taxon>
        <taxon>Actinomycetes</taxon>
        <taxon>Micrococcales</taxon>
        <taxon>Microbacteriaceae</taxon>
        <taxon>Clavibacter</taxon>
    </lineage>
</organism>
<reference key="1">
    <citation type="journal article" date="2008" name="J. Bacteriol.">
        <title>The genome sequence of the tomato-pathogenic actinomycete Clavibacter michiganensis subsp. michiganensis NCPPB382 reveals a large island involved in pathogenicity.</title>
        <authorList>
            <person name="Gartemann K.-H."/>
            <person name="Abt B."/>
            <person name="Bekel T."/>
            <person name="Burger A."/>
            <person name="Engemann J."/>
            <person name="Fluegel M."/>
            <person name="Gaigalat L."/>
            <person name="Goesmann A."/>
            <person name="Graefen I."/>
            <person name="Kalinowski J."/>
            <person name="Kaup O."/>
            <person name="Kirchner O."/>
            <person name="Krause L."/>
            <person name="Linke B."/>
            <person name="McHardy A."/>
            <person name="Meyer F."/>
            <person name="Pohle S."/>
            <person name="Rueckert C."/>
            <person name="Schneiker S."/>
            <person name="Zellermann E.-M."/>
            <person name="Puehler A."/>
            <person name="Eichenlaub R."/>
            <person name="Kaiser O."/>
            <person name="Bartels D."/>
        </authorList>
    </citation>
    <scope>NUCLEOTIDE SEQUENCE [LARGE SCALE GENOMIC DNA]</scope>
    <source>
        <strain>NCPPB 382</strain>
    </source>
</reference>
<protein>
    <recommendedName>
        <fullName evidence="1">DNA-directed RNA polymerase subunit alpha</fullName>
        <shortName evidence="1">RNAP subunit alpha</shortName>
        <ecNumber evidence="1">2.7.7.6</ecNumber>
    </recommendedName>
    <alternativeName>
        <fullName evidence="1">RNA polymerase subunit alpha</fullName>
    </alternativeName>
    <alternativeName>
        <fullName evidence="1">Transcriptase subunit alpha</fullName>
    </alternativeName>
</protein>
<feature type="chain" id="PRO_1000007683" description="DNA-directed RNA polymerase subunit alpha">
    <location>
        <begin position="1"/>
        <end position="331"/>
    </location>
</feature>
<feature type="region of interest" description="Alpha N-terminal domain (alpha-NTD)" evidence="1">
    <location>
        <begin position="1"/>
        <end position="226"/>
    </location>
</feature>
<feature type="region of interest" description="Alpha C-terminal domain (alpha-CTD)" evidence="1">
    <location>
        <begin position="243"/>
        <end position="331"/>
    </location>
</feature>
<proteinExistence type="inferred from homology"/>